<sequence>MYKIKNNESDINSDDCNETAQECIYGFSSPKKSRKESPIFVQNNDDTCSSNNIYEKKTCSNTSASSVKKYDKKEQSLCSDINNYNKVNIEGLKINERNYDRINNSEEETNINDDNNDDNNGDYDDDNNSDDDDDNDDNNNNDDNNNDDDEDVDDFEDIKENDEYKDPTYSDIYKEAKKCNIRCENIMNSSVNKKNLEEINESDPLNSSDNSMTSSSEESCSEESDKESDKESDKDGNLYDEELNEIIEEGYFKELIPAIPHDILQAYISCLKICGFERQVQLHRLINLLGDLRDPISVIQILGLPGMGKTKVVKNFIKLTNVPFAYVNCLMAVYQSGRSAKNVIYHTILKDLSINLLNEFNEYKKINNITNYSYDPTKLVPNHVSNTDNFFSILHKLLSFKPEDILNNKRTTENIRSPSNSNNNKKKKKEQNDSTGKNSKEECNNNEDDDDDNNKNNFNNNNSNNVRFNSNTNYYKDKLYDRSVVFILDNIRYLVRTHPDLFYALTRIHEYIKGPYNDVTKANKTTRGLCIILINRSPLPDEIFDGLPQPPTVWFDSYTSEMCKNILYRLYNSMCFESLLTYNDKDLKIYYVKHNKNEFLIKRNDVILENDVIYDIWCRYVDYIINVSYKDYKSDFHELLFICSHMWPLFIKPILDGVLEPIVENMNALQRNIDTHIRVATYNHSSHFTFELIDSVFLNENNLKNKIDLSFYSKILLVGAYLASRNLPLTDKRFFNATVKGGAFTLPKKRKGKNKNESILTLLSKSIPKNFTFIRWLCLTDCLLVCFFDEQLILNSLICQQINTLIQLGFISFSSPNNLSCLVRNSLMNGVQWSGYCGSALLNTTTNFSSLTNNIFCETNNSMTYESLDPYTKLVIQVPEETIRNISKEMKIPLDELII</sequence>
<protein>
    <recommendedName>
        <fullName evidence="5">Origin recognition complex subunit 5</fullName>
        <shortName evidence="5">PfORC5</shortName>
        <ecNumber evidence="4">3.6.4.-</ecNumber>
    </recommendedName>
</protein>
<proteinExistence type="evidence at protein level"/>
<comment type="function">
    <text evidence="1">Component of the origin recognition complex (ORC) that binds origins of replication.</text>
</comment>
<comment type="catalytic activity">
    <reaction evidence="4">
        <text>ATP + H2O = ADP + phosphate + H(+)</text>
        <dbReference type="Rhea" id="RHEA:13065"/>
        <dbReference type="ChEBI" id="CHEBI:15377"/>
        <dbReference type="ChEBI" id="CHEBI:15378"/>
        <dbReference type="ChEBI" id="CHEBI:30616"/>
        <dbReference type="ChEBI" id="CHEBI:43474"/>
        <dbReference type="ChEBI" id="CHEBI:456216"/>
    </reaction>
</comment>
<comment type="subunit">
    <text evidence="1 4">Component of the origin recognition complex (ORC) (By similarity). Interacts with PCNA1; the interaction occurs during the trophozoite stage but not at the late schizont stage (PubMed:18554328).</text>
</comment>
<comment type="subcellular location">
    <subcellularLocation>
        <location evidence="4">Nucleus</location>
    </subcellularLocation>
    <text evidence="4">During early-to mid replicating trophozoite stages, colocalizes with PCNA1 and ORC1 to distinct nuclear foci which probably are DNA replication origin sites (PubMed:18554328). Dissociates from PCNA1 during the late schizont stage (PubMed:18554328).</text>
</comment>
<comment type="developmental stage">
    <text evidence="4">Expressed during the asexual blood stage, specifically during the trophozoite and schizont stages (at protein level).</text>
</comment>
<comment type="similarity">
    <text evidence="6">Belongs to the ORC5 family.</text>
</comment>
<gene>
    <name evidence="5" type="primary">ORC5</name>
    <name evidence="7" type="ORF">PF3D7_0215800</name>
</gene>
<feature type="chain" id="PRO_0000454931" description="Origin recognition complex subunit 5">
    <location>
        <begin position="1"/>
        <end position="899"/>
    </location>
</feature>
<feature type="region of interest" description="Disordered" evidence="3">
    <location>
        <begin position="27"/>
        <end position="47"/>
    </location>
</feature>
<feature type="region of interest" description="Disordered" evidence="3">
    <location>
        <begin position="100"/>
        <end position="166"/>
    </location>
</feature>
<feature type="region of interest" description="Disordered" evidence="3">
    <location>
        <begin position="194"/>
        <end position="238"/>
    </location>
</feature>
<feature type="region of interest" description="Disordered" evidence="3">
    <location>
        <begin position="409"/>
        <end position="469"/>
    </location>
</feature>
<feature type="compositionally biased region" description="Acidic residues" evidence="3">
    <location>
        <begin position="105"/>
        <end position="160"/>
    </location>
</feature>
<feature type="compositionally biased region" description="Low complexity" evidence="3">
    <location>
        <begin position="207"/>
        <end position="218"/>
    </location>
</feature>
<feature type="compositionally biased region" description="Basic and acidic residues" evidence="3">
    <location>
        <begin position="227"/>
        <end position="237"/>
    </location>
</feature>
<feature type="compositionally biased region" description="Low complexity" evidence="3">
    <location>
        <begin position="455"/>
        <end position="469"/>
    </location>
</feature>
<feature type="binding site" evidence="2">
    <location>
        <begin position="303"/>
        <end position="310"/>
    </location>
    <ligand>
        <name>ATP</name>
        <dbReference type="ChEBI" id="CHEBI:30616"/>
    </ligand>
</feature>
<reference evidence="8" key="1">
    <citation type="journal article" date="1998" name="Science">
        <title>Chromosome 2 sequence of the human malaria parasite Plasmodium falciparum.</title>
        <authorList>
            <person name="Gardner M.J."/>
            <person name="Tettelin H."/>
            <person name="Carucci D.J."/>
            <person name="Cummings L.M."/>
            <person name="Aravind L."/>
            <person name="Koonin E.V."/>
            <person name="Shallom S.J."/>
            <person name="Mason T."/>
            <person name="Yu K."/>
            <person name="Fujii C."/>
            <person name="Pederson J."/>
            <person name="Shen K."/>
            <person name="Jing J."/>
            <person name="Aston C."/>
            <person name="Lai Z."/>
            <person name="Schwartz D.C."/>
            <person name="Pertea M."/>
            <person name="Salzberg S.L."/>
            <person name="Zhou L."/>
            <person name="Sutton G.G."/>
            <person name="Clayton R."/>
            <person name="White O."/>
            <person name="Smith H.O."/>
            <person name="Fraser C.M."/>
            <person name="Adams M.D."/>
            <person name="Venter J.C."/>
            <person name="Hoffman S.L."/>
        </authorList>
    </citation>
    <scope>NUCLEOTIDE SEQUENCE [LARGE SCALE GENOMIC DNA]</scope>
    <source>
        <strain evidence="8">3D7</strain>
    </source>
</reference>
<reference evidence="8" key="2">
    <citation type="journal article" date="2002" name="Nature">
        <title>Genome sequence of the human malaria parasite Plasmodium falciparum.</title>
        <authorList>
            <person name="Gardner M.J."/>
            <person name="Hall N."/>
            <person name="Fung E."/>
            <person name="White O."/>
            <person name="Berriman M."/>
            <person name="Hyman R.W."/>
            <person name="Carlton J.M."/>
            <person name="Pain A."/>
            <person name="Nelson K.E."/>
            <person name="Bowman S."/>
            <person name="Paulsen I.T."/>
            <person name="James K.D."/>
            <person name="Eisen J.A."/>
            <person name="Rutherford K.M."/>
            <person name="Salzberg S.L."/>
            <person name="Craig A."/>
            <person name="Kyes S."/>
            <person name="Chan M.-S."/>
            <person name="Nene V."/>
            <person name="Shallom S.J."/>
            <person name="Suh B."/>
            <person name="Peterson J."/>
            <person name="Angiuoli S."/>
            <person name="Pertea M."/>
            <person name="Allen J."/>
            <person name="Selengut J."/>
            <person name="Haft D."/>
            <person name="Mather M.W."/>
            <person name="Vaidya A.B."/>
            <person name="Martin D.M.A."/>
            <person name="Fairlamb A.H."/>
            <person name="Fraunholz M.J."/>
            <person name="Roos D.S."/>
            <person name="Ralph S.A."/>
            <person name="McFadden G.I."/>
            <person name="Cummings L.M."/>
            <person name="Subramanian G.M."/>
            <person name="Mungall C."/>
            <person name="Venter J.C."/>
            <person name="Carucci D.J."/>
            <person name="Hoffman S.L."/>
            <person name="Newbold C."/>
            <person name="Davis R.W."/>
            <person name="Fraser C.M."/>
            <person name="Barrell B.G."/>
        </authorList>
    </citation>
    <scope>NUCLEOTIDE SEQUENCE [LARGE SCALE GENOMIC DNA]</scope>
    <source>
        <strain evidence="8">3D7</strain>
    </source>
</reference>
<reference evidence="6" key="3">
    <citation type="journal article" date="2008" name="Mol. Microbiol.">
        <title>Plasmodium falciparum origin recognition complex subunit 5: functional characterization and role in DNA replication foci formation.</title>
        <authorList>
            <person name="Gupta A."/>
            <person name="Mehra P."/>
            <person name="Dhar S.K."/>
        </authorList>
    </citation>
    <scope>CATALYTIC ACTIVITY</scope>
    <scope>INTERACTION WITH PCNA1</scope>
    <scope>SUBCELLULAR LOCATION</scope>
    <scope>DEVELOPMENTAL STAGE</scope>
</reference>
<dbReference type="EC" id="3.6.4.-" evidence="4"/>
<dbReference type="EMBL" id="LN999943">
    <property type="protein sequence ID" value="CZT98171.1"/>
    <property type="molecule type" value="Genomic_DNA"/>
</dbReference>
<dbReference type="RefSeq" id="XP_001349663.1">
    <property type="nucleotide sequence ID" value="XM_001349627.1"/>
</dbReference>
<dbReference type="STRING" id="36329.O96237"/>
<dbReference type="PaxDb" id="5833-PFB0720c"/>
<dbReference type="EnsemblProtists" id="CZT98171">
    <property type="protein sequence ID" value="CZT98171"/>
    <property type="gene ID" value="PF3D7_0215800"/>
</dbReference>
<dbReference type="GeneID" id="812745"/>
<dbReference type="KEGG" id="pfa:PF3D7_0215800"/>
<dbReference type="VEuPathDB" id="PlasmoDB:PF3D7_0215800"/>
<dbReference type="HOGENOM" id="CLU_341165_0_0_1"/>
<dbReference type="InParanoid" id="O96237"/>
<dbReference type="OMA" id="DMCKNIL"/>
<dbReference type="OrthoDB" id="365981at2759"/>
<dbReference type="PhylomeDB" id="O96237"/>
<dbReference type="Proteomes" id="UP000001450">
    <property type="component" value="Chromosome 2"/>
</dbReference>
<dbReference type="GO" id="GO:0005664">
    <property type="term" value="C:nuclear origin of replication recognition complex"/>
    <property type="evidence" value="ECO:0000318"/>
    <property type="project" value="GO_Central"/>
</dbReference>
<dbReference type="GO" id="GO:0005656">
    <property type="term" value="C:nuclear pre-replicative complex"/>
    <property type="evidence" value="ECO:0000314"/>
    <property type="project" value="GeneDB"/>
</dbReference>
<dbReference type="GO" id="GO:0005634">
    <property type="term" value="C:nucleus"/>
    <property type="evidence" value="ECO:0000314"/>
    <property type="project" value="UniProtKB"/>
</dbReference>
<dbReference type="GO" id="GO:0005524">
    <property type="term" value="F:ATP binding"/>
    <property type="evidence" value="ECO:0000314"/>
    <property type="project" value="GeneDB"/>
</dbReference>
<dbReference type="GO" id="GO:0003688">
    <property type="term" value="F:DNA replication origin binding"/>
    <property type="evidence" value="ECO:0000318"/>
    <property type="project" value="GO_Central"/>
</dbReference>
<dbReference type="GO" id="GO:0016787">
    <property type="term" value="F:hydrolase activity"/>
    <property type="evidence" value="ECO:0007669"/>
    <property type="project" value="UniProtKB-KW"/>
</dbReference>
<dbReference type="GO" id="GO:0006270">
    <property type="term" value="P:DNA replication initiation"/>
    <property type="evidence" value="ECO:0000318"/>
    <property type="project" value="GO_Central"/>
</dbReference>
<dbReference type="Gene3D" id="3.40.50.300">
    <property type="entry name" value="P-loop containing nucleotide triphosphate hydrolases"/>
    <property type="match status" value="1"/>
</dbReference>
<dbReference type="InterPro" id="IPR020796">
    <property type="entry name" value="ORC5"/>
</dbReference>
<dbReference type="InterPro" id="IPR047088">
    <property type="entry name" value="ORC5_C"/>
</dbReference>
<dbReference type="InterPro" id="IPR048866">
    <property type="entry name" value="ORC5_lid"/>
</dbReference>
<dbReference type="InterPro" id="IPR027417">
    <property type="entry name" value="P-loop_NTPase"/>
</dbReference>
<dbReference type="PANTHER" id="PTHR12705">
    <property type="entry name" value="ORIGIN RECOGNITION COMPLEX SUBUNIT 5"/>
    <property type="match status" value="1"/>
</dbReference>
<dbReference type="PANTHER" id="PTHR12705:SF0">
    <property type="entry name" value="ORIGIN RECOGNITION COMPLEX SUBUNIT 5"/>
    <property type="match status" value="1"/>
</dbReference>
<dbReference type="Pfam" id="PF14630">
    <property type="entry name" value="ORC5_C"/>
    <property type="match status" value="1"/>
</dbReference>
<dbReference type="Pfam" id="PF21639">
    <property type="entry name" value="ORC5_lid"/>
    <property type="match status" value="1"/>
</dbReference>
<dbReference type="SUPFAM" id="SSF52540">
    <property type="entry name" value="P-loop containing nucleoside triphosphate hydrolases"/>
    <property type="match status" value="1"/>
</dbReference>
<keyword id="KW-0067">ATP-binding</keyword>
<keyword id="KW-0235">DNA replication</keyword>
<keyword id="KW-0378">Hydrolase</keyword>
<keyword id="KW-0547">Nucleotide-binding</keyword>
<keyword id="KW-0539">Nucleus</keyword>
<keyword id="KW-1185">Reference proteome</keyword>
<accession>O96237</accession>
<name>ORC5_PLAF7</name>
<organism evidence="8">
    <name type="scientific">Plasmodium falciparum (isolate 3D7)</name>
    <dbReference type="NCBI Taxonomy" id="36329"/>
    <lineage>
        <taxon>Eukaryota</taxon>
        <taxon>Sar</taxon>
        <taxon>Alveolata</taxon>
        <taxon>Apicomplexa</taxon>
        <taxon>Aconoidasida</taxon>
        <taxon>Haemosporida</taxon>
        <taxon>Plasmodiidae</taxon>
        <taxon>Plasmodium</taxon>
        <taxon>Plasmodium (Laverania)</taxon>
    </lineage>
</organism>
<evidence type="ECO:0000250" key="1">
    <source>
        <dbReference type="UniProtKB" id="P50874"/>
    </source>
</evidence>
<evidence type="ECO:0000255" key="2">
    <source>
        <dbReference type="PROSITE-ProRule" id="PRU00499"/>
    </source>
</evidence>
<evidence type="ECO:0000256" key="3">
    <source>
        <dbReference type="SAM" id="MobiDB-lite"/>
    </source>
</evidence>
<evidence type="ECO:0000269" key="4">
    <source>
    </source>
</evidence>
<evidence type="ECO:0000303" key="5">
    <source>
    </source>
</evidence>
<evidence type="ECO:0000305" key="6"/>
<evidence type="ECO:0000312" key="7">
    <source>
        <dbReference type="EMBL" id="CZT98171.1"/>
    </source>
</evidence>
<evidence type="ECO:0000312" key="8">
    <source>
        <dbReference type="Proteomes" id="UP000001450"/>
    </source>
</evidence>